<reference key="1">
    <citation type="journal article" date="2005" name="DNA Res.">
        <title>Complete genome sequence of the facultative anaerobic magnetotactic bacterium Magnetospirillum sp. strain AMB-1.</title>
        <authorList>
            <person name="Matsunaga T."/>
            <person name="Okamura Y."/>
            <person name="Fukuda Y."/>
            <person name="Wahyudi A.T."/>
            <person name="Murase Y."/>
            <person name="Takeyama H."/>
        </authorList>
    </citation>
    <scope>NUCLEOTIDE SEQUENCE [LARGE SCALE GENOMIC DNA]</scope>
    <scope>SUBCELLULAR LOCATION</scope>
    <source>
        <strain>ATCC 700264 / AMB-1</strain>
    </source>
</reference>
<reference key="2">
    <citation type="journal article" date="2010" name="Proc. Natl. Acad. Sci. U.S.A.">
        <title>Comprehensive genetic dissection of the magnetosome gene island reveals the step-wise assembly of a prokaryotic organelle.</title>
        <authorList>
            <person name="Murat D."/>
            <person name="Quinlan A."/>
            <person name="Vali H."/>
            <person name="Komeili A."/>
        </authorList>
    </citation>
    <scope>FUNCTION</scope>
    <scope>PROBABLE OPERON</scope>
    <scope>DISRUPTION PHENOTYPE</scope>
    <source>
        <strain>ATCC 700264 / AMB-1</strain>
    </source>
</reference>
<reference key="3">
    <citation type="journal article" date="2012" name="Mol. Microbiol.">
        <title>The magnetosome membrane protein, MmsF, is a major regulator of magnetite biomineralization in Magnetospirillum magneticum AMB-1.</title>
        <authorList>
            <person name="Murat D."/>
            <person name="Falahati V."/>
            <person name="Bertinetti L."/>
            <person name="Csencsits R."/>
            <person name="Koernig A."/>
            <person name="Downing K."/>
            <person name="Faivre D."/>
            <person name="Komeili A."/>
        </authorList>
    </citation>
    <scope>MINIMAL MAGNETOSOME ISLAND</scope>
    <source>
        <strain>ATCC 700264 / AMB-1</strain>
    </source>
</reference>
<evidence type="ECO:0000255" key="1"/>
<evidence type="ECO:0000269" key="2">
    <source>
    </source>
</evidence>
<evidence type="ECO:0000269" key="3">
    <source>
    </source>
</evidence>
<evidence type="ECO:0000269" key="4">
    <source>
    </source>
</evidence>
<evidence type="ECO:0000305" key="5"/>
<evidence type="ECO:0000305" key="6">
    <source>
    </source>
</evidence>
<keyword id="KW-0091">Biomineralization</keyword>
<keyword id="KW-1281">Magnetosome</keyword>
<keyword id="KW-0472">Membrane</keyword>
<keyword id="KW-0812">Transmembrane</keyword>
<keyword id="KW-1133">Transmembrane helix</keyword>
<accession>Q2W8P6</accession>
<proteinExistence type="inferred from homology"/>
<organism>
    <name type="scientific">Paramagnetospirillum magneticum (strain ATCC 700264 / AMB-1)</name>
    <name type="common">Magnetospirillum magneticum</name>
    <dbReference type="NCBI Taxonomy" id="342108"/>
    <lineage>
        <taxon>Bacteria</taxon>
        <taxon>Pseudomonadati</taxon>
        <taxon>Pseudomonadota</taxon>
        <taxon>Alphaproteobacteria</taxon>
        <taxon>Rhodospirillales</taxon>
        <taxon>Magnetospirillaceae</taxon>
        <taxon>Paramagnetospirillum</taxon>
    </lineage>
</organism>
<comment type="function">
    <text evidence="6">May play a role in magnetite crystal growth and size.</text>
</comment>
<comment type="subcellular location">
    <subcellularLocation>
        <location evidence="2">Magnetosome membrane</location>
        <topology evidence="1">Single-pass membrane protein</topology>
    </subcellularLocation>
</comment>
<comment type="induction">
    <text evidence="6">Part of the probable 18 gene mamAB operon.</text>
</comment>
<comment type="disruption phenotype">
    <text evidence="3">Cells have a weak magnetic response and make magnetosome membranes. Magnetite crystals are amorphous, smaller than wild-type and irregularly spaced (PubMed:20212111). Deletion of genes mamH to mamV (amb0961 to amb0978) gives cells with no magnetosomes and no magnetic response (PubMed:20212111).</text>
</comment>
<comment type="miscellaneous">
    <text evidence="5">This bacteria makes up to 20 cubo-octahedral magnetosomes of about 45 nm in diameter which contain membrane-bound crystals of magnetite (Fe(3)O(4)).</text>
</comment>
<comment type="miscellaneous">
    <text evidence="4">Expression of just the minimal mamAB gene cluster (amb0961 to amb0978), including this gene, is sufficient to form a minimal magnetosome chain with small magnetite particles.</text>
</comment>
<comment type="similarity">
    <text evidence="5">Belongs to the magnetosome MamS family.</text>
</comment>
<dbReference type="EMBL" id="AP007255">
    <property type="protein sequence ID" value="BAE49779.1"/>
    <property type="molecule type" value="Genomic_DNA"/>
</dbReference>
<dbReference type="RefSeq" id="WP_011383404.1">
    <property type="nucleotide sequence ID" value="NC_007626.1"/>
</dbReference>
<dbReference type="SMR" id="Q2W8P6"/>
<dbReference type="STRING" id="342108.amb0975"/>
<dbReference type="KEGG" id="mag:amb0975"/>
<dbReference type="HOGENOM" id="CLU_1494549_0_0_5"/>
<dbReference type="OrthoDB" id="7349442at2"/>
<dbReference type="Proteomes" id="UP000007058">
    <property type="component" value="Chromosome"/>
</dbReference>
<dbReference type="GO" id="GO:0110146">
    <property type="term" value="C:magnetosome membrane"/>
    <property type="evidence" value="ECO:0000315"/>
    <property type="project" value="UniProtKB"/>
</dbReference>
<dbReference type="NCBIfam" id="NF040991">
    <property type="entry name" value="MamS"/>
    <property type="match status" value="1"/>
</dbReference>
<sequence length="180" mass="18857">MDIRPERMLSRIRQMAEGAVSPQLVLGLGVVLILGLVVSAMLPDRFTGGGKTGGGVTAQSQALSLPAALPGLSPFTPATPLQFSGRVTQVASIGNDVGWGQVHIWIDNGTGALQEISVAPQAYLTQIGCPSFDGARVSGVGFIFDPGRPNAELYVKSIQVGGRTCKLRDDEGLALWMVVQ</sequence>
<gene>
    <name type="primary">mamS</name>
    <name type="ordered locus">amb0975</name>
</gene>
<name>MAMS_PARM1</name>
<feature type="chain" id="PRO_0000447811" description="Magnetosome protein MamS">
    <location>
        <begin position="1"/>
        <end position="180"/>
    </location>
</feature>
<feature type="topological domain" description="Cytoplasmic" evidence="5">
    <location>
        <begin position="1"/>
        <end position="21"/>
    </location>
</feature>
<feature type="transmembrane region" description="Helical" evidence="1">
    <location>
        <begin position="22"/>
        <end position="42"/>
    </location>
</feature>
<feature type="topological domain" description="Lumenal" evidence="5">
    <location>
        <begin position="43"/>
        <end position="180"/>
    </location>
</feature>
<protein>
    <recommendedName>
        <fullName evidence="5">Magnetosome protein MamS</fullName>
    </recommendedName>
</protein>